<dbReference type="GO" id="GO:0005576">
    <property type="term" value="C:extracellular region"/>
    <property type="evidence" value="ECO:0007669"/>
    <property type="project" value="UniProtKB-SubCell"/>
</dbReference>
<dbReference type="GO" id="GO:0005184">
    <property type="term" value="F:neuropeptide hormone activity"/>
    <property type="evidence" value="ECO:0007669"/>
    <property type="project" value="InterPro"/>
</dbReference>
<dbReference type="GO" id="GO:0007218">
    <property type="term" value="P:neuropeptide signaling pathway"/>
    <property type="evidence" value="ECO:0007669"/>
    <property type="project" value="UniProtKB-KW"/>
</dbReference>
<dbReference type="InterPro" id="IPR001484">
    <property type="entry name" value="Pyrokinin_CS"/>
</dbReference>
<dbReference type="PROSITE" id="PS00539">
    <property type="entry name" value="PYROKININ"/>
    <property type="match status" value="1"/>
</dbReference>
<reference evidence="5" key="1">
    <citation type="journal article" date="2009" name="BMC Evol. Biol.">
        <title>A proteomic approach for studying insect phylogeny: CAPA peptides of ancient insect taxa (Dictyoptera, Blattoptera) as a test case.</title>
        <authorList>
            <person name="Roth S."/>
            <person name="Fromm B."/>
            <person name="Gaede G."/>
            <person name="Predel R."/>
        </authorList>
    </citation>
    <scope>PROTEIN SEQUENCE</scope>
    <scope>AMIDATION AT LEU-17</scope>
    <source>
        <tissue evidence="3">Abdominal perisympathetic organs</tissue>
    </source>
</reference>
<protein>
    <recommendedName>
        <fullName evidence="1">Pyrokinin-5</fullName>
    </recommendedName>
    <alternativeName>
        <fullName evidence="1">FXPRL-amide</fullName>
    </alternativeName>
    <alternativeName>
        <fullName evidence="4">PseBi-Capa-PK</fullName>
    </alternativeName>
</protein>
<feature type="peptide" id="PRO_0000378720" description="Pyrokinin-5" evidence="3">
    <location>
        <begin position="1"/>
        <end position="17"/>
    </location>
</feature>
<feature type="modified residue" description="Leucine amide" evidence="3">
    <location>
        <position position="17"/>
    </location>
</feature>
<keyword id="KW-0027">Amidation</keyword>
<keyword id="KW-0903">Direct protein sequencing</keyword>
<keyword id="KW-0527">Neuropeptide</keyword>
<keyword id="KW-0964">Secreted</keyword>
<sequence length="17" mass="1653">GGGGSGETSGMWFGPRL</sequence>
<organism>
    <name type="scientific">Pseudoderopeltis cf. bimaculata JT-2004</name>
    <name type="common">Harlequin cockroach</name>
    <dbReference type="NCBI Taxonomy" id="304880"/>
    <lineage>
        <taxon>Eukaryota</taxon>
        <taxon>Metazoa</taxon>
        <taxon>Ecdysozoa</taxon>
        <taxon>Arthropoda</taxon>
        <taxon>Hexapoda</taxon>
        <taxon>Insecta</taxon>
        <taxon>Pterygota</taxon>
        <taxon>Neoptera</taxon>
        <taxon>Polyneoptera</taxon>
        <taxon>Dictyoptera</taxon>
        <taxon>Blattodea</taxon>
        <taxon>Blattoidea</taxon>
        <taxon>Blattidae</taxon>
        <taxon>Blattinae</taxon>
        <taxon>Pseudoderopeltis</taxon>
    </lineage>
</organism>
<comment type="function">
    <text evidence="1">Myoactive.</text>
</comment>
<comment type="subcellular location">
    <subcellularLocation>
        <location evidence="5">Secreted</location>
    </subcellularLocation>
</comment>
<comment type="similarity">
    <text evidence="2">Belongs to the pyrokinin family.</text>
</comment>
<proteinExistence type="evidence at protein level"/>
<evidence type="ECO:0000250" key="1">
    <source>
        <dbReference type="UniProtKB" id="P82617"/>
    </source>
</evidence>
<evidence type="ECO:0000255" key="2"/>
<evidence type="ECO:0000269" key="3">
    <source>
    </source>
</evidence>
<evidence type="ECO:0000303" key="4">
    <source>
    </source>
</evidence>
<evidence type="ECO:0000305" key="5"/>
<name>PPK5_PSEBJ</name>
<accession>P85751</accession>